<proteinExistence type="inferred from homology"/>
<dbReference type="EC" id="7.1.1.-" evidence="1"/>
<dbReference type="EMBL" id="DQ923116">
    <property type="protein sequence ID" value="ABI49831.1"/>
    <property type="molecule type" value="Genomic_DNA"/>
</dbReference>
<dbReference type="RefSeq" id="YP_740617.1">
    <property type="nucleotide sequence ID" value="NC_008335.1"/>
</dbReference>
<dbReference type="SMR" id="Q09FZ4"/>
<dbReference type="GeneID" id="4271356"/>
<dbReference type="GO" id="GO:0009535">
    <property type="term" value="C:chloroplast thylakoid membrane"/>
    <property type="evidence" value="ECO:0007669"/>
    <property type="project" value="UniProtKB-SubCell"/>
</dbReference>
<dbReference type="GO" id="GO:0030964">
    <property type="term" value="C:NADH dehydrogenase complex"/>
    <property type="evidence" value="ECO:0007669"/>
    <property type="project" value="TreeGrafter"/>
</dbReference>
<dbReference type="GO" id="GO:0016655">
    <property type="term" value="F:oxidoreductase activity, acting on NAD(P)H, quinone or similar compound as acceptor"/>
    <property type="evidence" value="ECO:0007669"/>
    <property type="project" value="UniProtKB-UniRule"/>
</dbReference>
<dbReference type="GO" id="GO:0048038">
    <property type="term" value="F:quinone binding"/>
    <property type="evidence" value="ECO:0007669"/>
    <property type="project" value="UniProtKB-KW"/>
</dbReference>
<dbReference type="GO" id="GO:0042773">
    <property type="term" value="P:ATP synthesis coupled electron transport"/>
    <property type="evidence" value="ECO:0007669"/>
    <property type="project" value="InterPro"/>
</dbReference>
<dbReference type="GO" id="GO:0019684">
    <property type="term" value="P:photosynthesis, light reaction"/>
    <property type="evidence" value="ECO:0007669"/>
    <property type="project" value="UniProtKB-UniRule"/>
</dbReference>
<dbReference type="FunFam" id="1.10.287.3510:FF:000001">
    <property type="entry name" value="NADH-quinone oxidoreductase subunit K"/>
    <property type="match status" value="1"/>
</dbReference>
<dbReference type="Gene3D" id="1.10.287.3510">
    <property type="match status" value="1"/>
</dbReference>
<dbReference type="HAMAP" id="MF_01456">
    <property type="entry name" value="NDH1_NuoK"/>
    <property type="match status" value="1"/>
</dbReference>
<dbReference type="InterPro" id="IPR001133">
    <property type="entry name" value="NADH_UbQ_OxRdtase_chain4L/K"/>
</dbReference>
<dbReference type="InterPro" id="IPR039428">
    <property type="entry name" value="NUOK/Mnh_C1-like"/>
</dbReference>
<dbReference type="NCBIfam" id="NF004320">
    <property type="entry name" value="PRK05715.1-2"/>
    <property type="match status" value="1"/>
</dbReference>
<dbReference type="NCBIfam" id="NF004322">
    <property type="entry name" value="PRK05715.1-4"/>
    <property type="match status" value="1"/>
</dbReference>
<dbReference type="NCBIfam" id="NF004323">
    <property type="entry name" value="PRK05715.1-5"/>
    <property type="match status" value="1"/>
</dbReference>
<dbReference type="PANTHER" id="PTHR11434:SF16">
    <property type="entry name" value="NADH-UBIQUINONE OXIDOREDUCTASE CHAIN 4L"/>
    <property type="match status" value="1"/>
</dbReference>
<dbReference type="PANTHER" id="PTHR11434">
    <property type="entry name" value="NADH-UBIQUINONE OXIDOREDUCTASE SUBUNIT ND4L"/>
    <property type="match status" value="1"/>
</dbReference>
<dbReference type="Pfam" id="PF00420">
    <property type="entry name" value="Oxidored_q2"/>
    <property type="match status" value="1"/>
</dbReference>
<keyword id="KW-0150">Chloroplast</keyword>
<keyword id="KW-0472">Membrane</keyword>
<keyword id="KW-0520">NAD</keyword>
<keyword id="KW-0521">NADP</keyword>
<keyword id="KW-0934">Plastid</keyword>
<keyword id="KW-0618">Plastoquinone</keyword>
<keyword id="KW-0874">Quinone</keyword>
<keyword id="KW-0793">Thylakoid</keyword>
<keyword id="KW-1278">Translocase</keyword>
<keyword id="KW-0812">Transmembrane</keyword>
<keyword id="KW-1133">Transmembrane helix</keyword>
<keyword id="KW-0813">Transport</keyword>
<gene>
    <name evidence="1" type="primary">ndhE</name>
</gene>
<evidence type="ECO:0000255" key="1">
    <source>
        <dbReference type="HAMAP-Rule" id="MF_01456"/>
    </source>
</evidence>
<name>NU4LC_PLAOC</name>
<organism>
    <name type="scientific">Platanus occidentalis</name>
    <name type="common">Sycamore</name>
    <name type="synonym">American plane tree</name>
    <dbReference type="NCBI Taxonomy" id="4403"/>
    <lineage>
        <taxon>Eukaryota</taxon>
        <taxon>Viridiplantae</taxon>
        <taxon>Streptophyta</taxon>
        <taxon>Embryophyta</taxon>
        <taxon>Tracheophyta</taxon>
        <taxon>Spermatophyta</taxon>
        <taxon>Magnoliopsida</taxon>
        <taxon>Proteales</taxon>
        <taxon>Platanaceae</taxon>
        <taxon>Platanus</taxon>
    </lineage>
</organism>
<geneLocation type="chloroplast"/>
<comment type="function">
    <text evidence="1">NDH shuttles electrons from NAD(P)H:plastoquinone, via FMN and iron-sulfur (Fe-S) centers, to quinones in the photosynthetic chain and possibly in a chloroplast respiratory chain. The immediate electron acceptor for the enzyme in this species is believed to be plastoquinone. Couples the redox reaction to proton translocation, and thus conserves the redox energy in a proton gradient.</text>
</comment>
<comment type="catalytic activity">
    <reaction evidence="1">
        <text>a plastoquinone + NADH + (n+1) H(+)(in) = a plastoquinol + NAD(+) + n H(+)(out)</text>
        <dbReference type="Rhea" id="RHEA:42608"/>
        <dbReference type="Rhea" id="RHEA-COMP:9561"/>
        <dbReference type="Rhea" id="RHEA-COMP:9562"/>
        <dbReference type="ChEBI" id="CHEBI:15378"/>
        <dbReference type="ChEBI" id="CHEBI:17757"/>
        <dbReference type="ChEBI" id="CHEBI:57540"/>
        <dbReference type="ChEBI" id="CHEBI:57945"/>
        <dbReference type="ChEBI" id="CHEBI:62192"/>
    </reaction>
</comment>
<comment type="catalytic activity">
    <reaction evidence="1">
        <text>a plastoquinone + NADPH + (n+1) H(+)(in) = a plastoquinol + NADP(+) + n H(+)(out)</text>
        <dbReference type="Rhea" id="RHEA:42612"/>
        <dbReference type="Rhea" id="RHEA-COMP:9561"/>
        <dbReference type="Rhea" id="RHEA-COMP:9562"/>
        <dbReference type="ChEBI" id="CHEBI:15378"/>
        <dbReference type="ChEBI" id="CHEBI:17757"/>
        <dbReference type="ChEBI" id="CHEBI:57783"/>
        <dbReference type="ChEBI" id="CHEBI:58349"/>
        <dbReference type="ChEBI" id="CHEBI:62192"/>
    </reaction>
</comment>
<comment type="subunit">
    <text evidence="1">NDH is composed of at least 16 different subunits, 5 of which are encoded in the nucleus.</text>
</comment>
<comment type="subcellular location">
    <subcellularLocation>
        <location evidence="1">Plastid</location>
        <location evidence="1">Chloroplast thylakoid membrane</location>
        <topology evidence="1">Multi-pass membrane protein</topology>
    </subcellularLocation>
</comment>
<comment type="similarity">
    <text evidence="1">Belongs to the complex I subunit 4L family.</text>
</comment>
<reference key="1">
    <citation type="journal article" date="2006" name="BMC Plant Biol.">
        <title>Rapid and accurate pyrosequencing of angiosperm plastid genomes.</title>
        <authorList>
            <person name="Moore M.J."/>
            <person name="Dhingra A."/>
            <person name="Soltis P.S."/>
            <person name="Shaw R."/>
            <person name="Farmerie W.G."/>
            <person name="Folta K.M."/>
            <person name="Soltis D.E."/>
        </authorList>
    </citation>
    <scope>NUCLEOTIDE SEQUENCE [LARGE SCALE GENOMIC DNA]</scope>
</reference>
<accession>Q09FZ4</accession>
<protein>
    <recommendedName>
        <fullName evidence="1">NAD(P)H-quinone oxidoreductase subunit 4L, chloroplastic</fullName>
        <ecNumber evidence="1">7.1.1.-</ecNumber>
    </recommendedName>
    <alternativeName>
        <fullName evidence="1">NAD(P)H dehydrogenase subunit 4L</fullName>
    </alternativeName>
    <alternativeName>
        <fullName evidence="1">NADH-plastoquinone oxidoreductase subunit 4L</fullName>
    </alternativeName>
</protein>
<feature type="chain" id="PRO_0000360362" description="NAD(P)H-quinone oxidoreductase subunit 4L, chloroplastic">
    <location>
        <begin position="1"/>
        <end position="101"/>
    </location>
</feature>
<feature type="transmembrane region" description="Helical" evidence="1">
    <location>
        <begin position="2"/>
        <end position="22"/>
    </location>
</feature>
<feature type="transmembrane region" description="Helical" evidence="1">
    <location>
        <begin position="32"/>
        <end position="52"/>
    </location>
</feature>
<feature type="transmembrane region" description="Helical" evidence="1">
    <location>
        <begin position="61"/>
        <end position="81"/>
    </location>
</feature>
<sequence length="101" mass="11267">MILEHVLVLSAYLFSIGIYGLITSRNMVRALMCLELILNAVNINFVTFSDFFDSRQLRGDIFSIFVIAIAAAEAAIGPAILSSIFRNRKSTRINQSNLLNK</sequence>